<comment type="function">
    <text evidence="4 9">FAD-dependent monooxygenase; part of the gene cluster that mediates the biosynthesis of sesquiterpenyl epoxy-cyclohexenoids (SECs) such as anthrobotrisins and arthrosporols, metabolites that possess a novel hybrid carbon skeleton consisting of a polyketide-derived epoxycyclohexenol combined with a terpenoid-derived monocyclic sesquiterpenol substructure (PKS-PTS hybrid) (PubMed:33823587). The SEC pathway plays an important role for fungal soil colonization via decreasing fungal nematode-capturing ability (PubMed:33823587). Within the pathway, the FAD-dependent monooxygenase AOL_s00215g279 plays a role in the oxygenation of the phenol moiety, most likely in the epoxy formation (PubMed:33823587). The pathway begins with the biosynthesis of 6-methylsalicylic acid (6-MSA), the first precursor of the polyketide-derived epoxycyclohexenol in arthrosporols, by the polyketide synthase (PKS) AOL_s00215g283 via condensation of 1 acetate and 3 malonate units. The 6-methylsalicylic acid decarboxylase AOL_s00215g281 then catalyzes the decarboxylation of 6-methylsalicylic acid to yield m-cresol. The cytochrome P450 monooxygenase AOL_s00215g282 further oxidizes m-cresol to yield toluquinol. With the assistance of the oxidoreductase AOL_s00215g277, the polyprenyl transferase AOL_s00215g276 catalyzes the farnesylation of toluquinol to produce farnesyl hydroquinone, the hybrid precursor for biosynthesis of SECs. Farnesyl hydroquinone undergoes epoxidation and then subsequent dehydrogenation to form farnesyl epoxy-quinone, the first and simplest SEC. The cytochrome P450 monooxygenase AOL_s00215g278 and the FAD-dependent monooxygenase AOL_s00215g279 might be involved in the oxygenation of the phenol moiety, most likely in the epoxy formation. The cytochrome P450 monooxygenases AOL_s00215g274 and AOL_s00215g280 are involved in specific regional ketone reductions at respectively C-4 and C-1 of farnesyl epoxy-quinone PubMed:33823587 (Probable).</text>
</comment>
<comment type="pathway">
    <text evidence="4">Secondary metabolite biosynthesis; terpenoid biosynthesis.</text>
</comment>
<comment type="induction">
    <text evidence="5 6">Expression is down-regulated by the cluster-specific transcription factor AOL_s00215g275 (PubMed:36547594). Expression is also down-regulated by the HOG1-MAPK pathway downstream transcription factor MSN2 (PubMed:38331317).</text>
</comment>
<comment type="disruption phenotype">
    <text evidence="4">Abolishes the production of arthrobotrisins A to D, and leads to the accumulation of a pair of epimers without the characteristic epoxy core (PubMed:33823587). Shows substantial reduction in conidiation (PubMed:33823587). Shows significantly increased ammonia levels in fungal mycelia (PubMed:33823587).</text>
</comment>
<comment type="similarity">
    <text evidence="8">Belongs to the oxygen-dependent FAD-linked oxidoreductase family.</text>
</comment>
<feature type="signal peptide" evidence="2">
    <location>
        <begin position="1"/>
        <end position="17"/>
    </location>
</feature>
<feature type="chain" id="PRO_5003427707" description="FAD-dependent monooxygenase AOL_s00215g279">
    <location>
        <begin position="18"/>
        <end position="511"/>
    </location>
</feature>
<feature type="domain" description="FAD-binding PCMH-type" evidence="3">
    <location>
        <begin position="85"/>
        <end position="256"/>
    </location>
</feature>
<feature type="modified residue" description="Pros-8alpha-FAD histidine" evidence="1">
    <location>
        <position position="122"/>
    </location>
</feature>
<evidence type="ECO:0000250" key="1">
    <source>
        <dbReference type="UniProtKB" id="P08159"/>
    </source>
</evidence>
<evidence type="ECO:0000255" key="2"/>
<evidence type="ECO:0000255" key="3">
    <source>
        <dbReference type="PROSITE-ProRule" id="PRU00718"/>
    </source>
</evidence>
<evidence type="ECO:0000269" key="4">
    <source>
    </source>
</evidence>
<evidence type="ECO:0000269" key="5">
    <source>
    </source>
</evidence>
<evidence type="ECO:0000269" key="6">
    <source>
    </source>
</evidence>
<evidence type="ECO:0000303" key="7">
    <source>
    </source>
</evidence>
<evidence type="ECO:0000305" key="8"/>
<evidence type="ECO:0000305" key="9">
    <source>
    </source>
</evidence>
<gene>
    <name type="ORF">AOL_s00215g279</name>
</gene>
<keyword id="KW-0274">FAD</keyword>
<keyword id="KW-0285">Flavoprotein</keyword>
<keyword id="KW-0560">Oxidoreductase</keyword>
<keyword id="KW-1185">Reference proteome</keyword>
<keyword id="KW-0732">Signal</keyword>
<organism>
    <name type="scientific">Arthrobotrys oligospora (strain ATCC 24927 / CBS 115.81 / DSM 1491)</name>
    <name type="common">Nematode-trapping fungus</name>
    <name type="synonym">Didymozoophaga oligospora</name>
    <dbReference type="NCBI Taxonomy" id="756982"/>
    <lineage>
        <taxon>Eukaryota</taxon>
        <taxon>Fungi</taxon>
        <taxon>Dikarya</taxon>
        <taxon>Ascomycota</taxon>
        <taxon>Pezizomycotina</taxon>
        <taxon>Orbiliomycetes</taxon>
        <taxon>Orbiliales</taxon>
        <taxon>Orbiliaceae</taxon>
        <taxon>Orbilia</taxon>
        <taxon>Orbilia oligospora</taxon>
    </lineage>
</organism>
<name>AR279_ARTOA</name>
<reference key="1">
    <citation type="journal article" date="2011" name="PLoS Pathog.">
        <title>Genomic and proteomic analyses of the fungus Arthrobotrys oligospora provide insights into nematode-trap formation.</title>
        <authorList>
            <person name="Yang J."/>
            <person name="Wang L."/>
            <person name="Ji X."/>
            <person name="Feng Y."/>
            <person name="Li X."/>
            <person name="Zou C."/>
            <person name="Xu J."/>
            <person name="Ren Y."/>
            <person name="Mi Q."/>
            <person name="Wu J."/>
            <person name="Liu S."/>
            <person name="Liu Y."/>
            <person name="Huang X."/>
            <person name="Wang H."/>
            <person name="Niu X."/>
            <person name="Li J."/>
            <person name="Liang L."/>
            <person name="Luo Y."/>
            <person name="Ji K."/>
            <person name="Zhou W."/>
            <person name="Yu Z."/>
            <person name="Li G."/>
            <person name="Liu Y."/>
            <person name="Li L."/>
            <person name="Qiao M."/>
            <person name="Feng L."/>
            <person name="Zhang K.-Q."/>
        </authorList>
    </citation>
    <scope>NUCLEOTIDE SEQUENCE [LARGE SCALE GENOMIC DNA]</scope>
    <source>
        <strain>ATCC 24927 / CBS 115.81 / DSM 1491</strain>
    </source>
</reference>
<reference key="2">
    <citation type="journal article" date="2021" name="J. Agric. Food Chem.">
        <title>Polyketide synthase-terpenoid synthase hybrid pathway regulation of trap formation through ammonia metabolism controls soil colonization of predominant nematode-trapping fungus.</title>
        <authorList>
            <person name="He Z.Q."/>
            <person name="Wang L.J."/>
            <person name="Wang Y.J."/>
            <person name="Chen Y.H."/>
            <person name="Wen Y."/>
            <person name="Zhang K.Q."/>
            <person name="Niu X.M."/>
        </authorList>
    </citation>
    <scope>FUNCTION</scope>
    <scope>DISRUPTION PHENOTYPE</scope>
    <scope>PATHWAY</scope>
</reference>
<reference key="3">
    <citation type="journal article" date="2022" name="J. Fungi">
        <title>The multifaceted gene 275 embedded in the PKS-PTS gene cluster was involved in the regulation of arthrobotrisin biosynthesis, TCA cycle, and septa formation in nematode-trapping fungus Arthrobotrys oligospora.</title>
        <authorList>
            <person name="Zhou J."/>
            <person name="Wu Q.F."/>
            <person name="Li S.H."/>
            <person name="Yan J.X."/>
            <person name="Wu L."/>
            <person name="Cheng Q.Y."/>
            <person name="He Z.Q."/>
            <person name="Yue X.T."/>
            <person name="Zhang K.Q."/>
            <person name="Zhang L.L."/>
            <person name="Niu X.M."/>
        </authorList>
    </citation>
    <scope>INDUCTION</scope>
</reference>
<reference key="4">
    <citation type="journal article" date="2025" name="J. Adv. Res.">
        <title>Identification of a transcription factor AoMsn2 of the Hog1 signaling pathway contributes to fungal growth, development and pathogenicity in Arthrobotrys oligospora.</title>
        <authorList>
            <person name="Liu Q."/>
            <person name="Jiang K."/>
            <person name="Duan S."/>
            <person name="Zhao N."/>
            <person name="Shen Y."/>
            <person name="Zhu L."/>
            <person name="Zhang K.Q."/>
            <person name="Yang J."/>
        </authorList>
    </citation>
    <scope>INDUCTION</scope>
</reference>
<proteinExistence type="evidence at transcript level"/>
<dbReference type="EC" id="1.-.-.-" evidence="9"/>
<dbReference type="EMBL" id="ADOT01000316">
    <property type="protein sequence ID" value="EGX43543.1"/>
    <property type="molecule type" value="Genomic_DNA"/>
</dbReference>
<dbReference type="RefSeq" id="XP_011127783.1">
    <property type="nucleotide sequence ID" value="XM_011129481.1"/>
</dbReference>
<dbReference type="SMR" id="G1XU00"/>
<dbReference type="STRING" id="756982.G1XU00"/>
<dbReference type="GeneID" id="22898689"/>
<dbReference type="eggNOG" id="ENOG502RZAG">
    <property type="taxonomic scope" value="Eukaryota"/>
</dbReference>
<dbReference type="HOGENOM" id="CLU_018354_1_2_1"/>
<dbReference type="InParanoid" id="G1XU00"/>
<dbReference type="OrthoDB" id="1403172at4890"/>
<dbReference type="UniPathway" id="UPA00213"/>
<dbReference type="Proteomes" id="UP000008784">
    <property type="component" value="Unassembled WGS sequence"/>
</dbReference>
<dbReference type="GO" id="GO:0071949">
    <property type="term" value="F:FAD binding"/>
    <property type="evidence" value="ECO:0007669"/>
    <property type="project" value="InterPro"/>
</dbReference>
<dbReference type="GO" id="GO:0016491">
    <property type="term" value="F:oxidoreductase activity"/>
    <property type="evidence" value="ECO:0007669"/>
    <property type="project" value="UniProtKB-KW"/>
</dbReference>
<dbReference type="GO" id="GO:0016114">
    <property type="term" value="P:terpenoid biosynthetic process"/>
    <property type="evidence" value="ECO:0007669"/>
    <property type="project" value="UniProtKB-UniPathway"/>
</dbReference>
<dbReference type="Gene3D" id="3.30.465.10">
    <property type="match status" value="1"/>
</dbReference>
<dbReference type="InterPro" id="IPR016166">
    <property type="entry name" value="FAD-bd_PCMH"/>
</dbReference>
<dbReference type="InterPro" id="IPR036318">
    <property type="entry name" value="FAD-bd_PCMH-like_sf"/>
</dbReference>
<dbReference type="InterPro" id="IPR016169">
    <property type="entry name" value="FAD-bd_PCMH_sub2"/>
</dbReference>
<dbReference type="InterPro" id="IPR050416">
    <property type="entry name" value="FAD-linked_Oxidoreductase"/>
</dbReference>
<dbReference type="InterPro" id="IPR006094">
    <property type="entry name" value="Oxid_FAD_bind_N"/>
</dbReference>
<dbReference type="PANTHER" id="PTHR42973">
    <property type="entry name" value="BINDING OXIDOREDUCTASE, PUTATIVE (AFU_ORTHOLOGUE AFUA_1G17690)-RELATED"/>
    <property type="match status" value="1"/>
</dbReference>
<dbReference type="PANTHER" id="PTHR42973:SF54">
    <property type="entry name" value="FAD-BINDING PCMH-TYPE DOMAIN-CONTAINING PROTEIN"/>
    <property type="match status" value="1"/>
</dbReference>
<dbReference type="Pfam" id="PF01565">
    <property type="entry name" value="FAD_binding_4"/>
    <property type="match status" value="1"/>
</dbReference>
<dbReference type="SUPFAM" id="SSF56176">
    <property type="entry name" value="FAD-binding/transporter-associated domain-like"/>
    <property type="match status" value="1"/>
</dbReference>
<dbReference type="PROSITE" id="PS51387">
    <property type="entry name" value="FAD_PCMH"/>
    <property type="match status" value="1"/>
</dbReference>
<protein>
    <recommendedName>
        <fullName evidence="7">FAD-dependent monooxygenase AOL_s00215g279</fullName>
        <ecNumber evidence="9">1.-.-.-</ecNumber>
    </recommendedName>
    <alternativeName>
        <fullName evidence="7">Sesquiterpenyl epoxy-cyclohexenoids cluster protein AOL_s00215g279</fullName>
        <shortName evidence="7">SECs cluster protein AOL_s00215g279</shortName>
    </alternativeName>
</protein>
<sequence>MRFTLYGLLGFASLLHAAPIAENLSTTLKSLNVNPADFSLWDQRNFLGNPRLTCVVLEKLFGSKSTGVYESGYTALTEITWSQTCWVNPACIVSPANAQDVSKAIIVLRALQTKFSVRSGGHMANPGFSSAGPDAVLISLSNLTKLSLSSDKSIATIGVGNRWGAVYNYLQPYNVTVIGGRIGTVGSALVLGGGLNYFSGQFGLSADTVERFQVVLSDGSIVTATRTKNSDLFQALKGGSANFGIVTEFDLRTRYSGPLYYEAVLYPGDQYPALMKALVEYQRNGSLDTKASLVTSFRVEGNLVVFLYLDPVIRPSAFDPFYSVPSIPFFPPGFATITELVAALGIGFSSEPERDATRVTSFETDESILNYSYGIWQQVVATLPANASLEWVPQPIGAGLKAKGDQYGGNILGLPAKNHIWLDIVAKWKNPADDAFVLNASKFILDKTDAFAKSKNKYLPYLFMNDAYADQKVLRSYGTTNFNKIVQVSKKYDPSQTFQKLQGNGYLWTRE</sequence>
<accession>G1XU00</accession>